<gene>
    <name type="primary">psaA</name>
</gene>
<sequence length="309" mass="34615">MKKLGTLLVLFLSVIALVACASGKKDATSGQKLKVVATNSIIADITKNIAGDKIDLHSIVPVGQDPHEYEPLPEDVKKTSQADLIFYNGINLETGGNAWFTKLVENAKKTENKDYFAVSEGVDVIYLEGQNEKGKEDPHAWLNLENGMIYAKNIAKQLIAKDPSNKEFYEKNLKDYTEKLDKLDKEAKEKFNNIPAEKKLIVTSEGCFKYFSKAYGVPSAYIWEINTEEEGTPEQIKTLVEKLRQTKVPSLFVESSVDDRPMKTVSQDTNIPIYAQIFTDSIAEEGKEGDSYYSMMKYNLDKIAEGLSK</sequence>
<feature type="signal peptide" evidence="2">
    <location>
        <begin position="1"/>
        <end position="19"/>
    </location>
</feature>
<feature type="chain" id="PRO_0000031884" description="Manganese ABC transporter substrate-binding lipoprotein PsaA">
    <location>
        <begin position="20"/>
        <end position="309"/>
    </location>
</feature>
<feature type="binding site" evidence="1">
    <location>
        <position position="67"/>
    </location>
    <ligand>
        <name>Mn(2+)</name>
        <dbReference type="ChEBI" id="CHEBI:29035"/>
    </ligand>
</feature>
<feature type="binding site" evidence="1">
    <location>
        <position position="139"/>
    </location>
    <ligand>
        <name>Mn(2+)</name>
        <dbReference type="ChEBI" id="CHEBI:29035"/>
    </ligand>
</feature>
<feature type="binding site" evidence="1">
    <location>
        <position position="205"/>
    </location>
    <ligand>
        <name>Mn(2+)</name>
        <dbReference type="ChEBI" id="CHEBI:29035"/>
    </ligand>
</feature>
<feature type="binding site" evidence="1">
    <location>
        <position position="280"/>
    </location>
    <ligand>
        <name>Mn(2+)</name>
        <dbReference type="ChEBI" id="CHEBI:29035"/>
    </ligand>
</feature>
<feature type="lipid moiety-binding region" description="N-palmitoyl cysteine" evidence="2">
    <location>
        <position position="20"/>
    </location>
</feature>
<feature type="lipid moiety-binding region" description="S-diacylglycerol cysteine" evidence="2">
    <location>
        <position position="20"/>
    </location>
</feature>
<keyword id="KW-1003">Cell membrane</keyword>
<keyword id="KW-0449">Lipoprotein</keyword>
<keyword id="KW-0464">Manganese</keyword>
<keyword id="KW-0472">Membrane</keyword>
<keyword id="KW-0479">Metal-binding</keyword>
<keyword id="KW-0564">Palmitate</keyword>
<keyword id="KW-0732">Signal</keyword>
<keyword id="KW-0813">Transport</keyword>
<keyword id="KW-0862">Zinc</keyword>
<accession>Q9L5X1</accession>
<organism>
    <name type="scientific">Streptococcus anginosus</name>
    <dbReference type="NCBI Taxonomy" id="1328"/>
    <lineage>
        <taxon>Bacteria</taxon>
        <taxon>Bacillati</taxon>
        <taxon>Bacillota</taxon>
        <taxon>Bacilli</taxon>
        <taxon>Lactobacillales</taxon>
        <taxon>Streptococcaceae</taxon>
        <taxon>Streptococcus</taxon>
        <taxon>Streptococcus anginosus group</taxon>
    </lineage>
</organism>
<proteinExistence type="inferred from homology"/>
<dbReference type="EMBL" id="AF248235">
    <property type="protein sequence ID" value="AAF64228.1"/>
    <property type="molecule type" value="Genomic_DNA"/>
</dbReference>
<dbReference type="SMR" id="Q9L5X1"/>
<dbReference type="STRING" id="862971.SANR_0284"/>
<dbReference type="GO" id="GO:0005886">
    <property type="term" value="C:plasma membrane"/>
    <property type="evidence" value="ECO:0007669"/>
    <property type="project" value="UniProtKB-SubCell"/>
</dbReference>
<dbReference type="GO" id="GO:0046872">
    <property type="term" value="F:metal ion binding"/>
    <property type="evidence" value="ECO:0007669"/>
    <property type="project" value="UniProtKB-KW"/>
</dbReference>
<dbReference type="GO" id="GO:0007155">
    <property type="term" value="P:cell adhesion"/>
    <property type="evidence" value="ECO:0007669"/>
    <property type="project" value="InterPro"/>
</dbReference>
<dbReference type="GO" id="GO:0030001">
    <property type="term" value="P:metal ion transport"/>
    <property type="evidence" value="ECO:0007669"/>
    <property type="project" value="InterPro"/>
</dbReference>
<dbReference type="CDD" id="cd01137">
    <property type="entry name" value="PsaA"/>
    <property type="match status" value="1"/>
</dbReference>
<dbReference type="Gene3D" id="3.40.50.1980">
    <property type="entry name" value="Nitrogenase molybdenum iron protein domain"/>
    <property type="match status" value="2"/>
</dbReference>
<dbReference type="InterPro" id="IPR006129">
    <property type="entry name" value="AdhesinB"/>
</dbReference>
<dbReference type="InterPro" id="IPR050492">
    <property type="entry name" value="Bact_metal-bind_prot9"/>
</dbReference>
<dbReference type="InterPro" id="IPR006128">
    <property type="entry name" value="Lipoprotein_PsaA-like"/>
</dbReference>
<dbReference type="InterPro" id="IPR006127">
    <property type="entry name" value="ZnuA-like"/>
</dbReference>
<dbReference type="NCBIfam" id="NF040928">
    <property type="entry name" value="ABC_lipo_SloC"/>
    <property type="match status" value="1"/>
</dbReference>
<dbReference type="PANTHER" id="PTHR42953">
    <property type="entry name" value="HIGH-AFFINITY ZINC UPTAKE SYSTEM PROTEIN ZNUA-RELATED"/>
    <property type="match status" value="1"/>
</dbReference>
<dbReference type="PANTHER" id="PTHR42953:SF1">
    <property type="entry name" value="METAL-BINDING PROTEIN HI_0362-RELATED"/>
    <property type="match status" value="1"/>
</dbReference>
<dbReference type="Pfam" id="PF01297">
    <property type="entry name" value="ZnuA"/>
    <property type="match status" value="1"/>
</dbReference>
<dbReference type="PRINTS" id="PR00691">
    <property type="entry name" value="ADHESINB"/>
</dbReference>
<dbReference type="PRINTS" id="PR00690">
    <property type="entry name" value="ADHESNFAMILY"/>
</dbReference>
<dbReference type="SUPFAM" id="SSF53807">
    <property type="entry name" value="Helical backbone' metal receptor"/>
    <property type="match status" value="1"/>
</dbReference>
<dbReference type="PROSITE" id="PS51257">
    <property type="entry name" value="PROKAR_LIPOPROTEIN"/>
    <property type="match status" value="1"/>
</dbReference>
<reference key="1">
    <citation type="journal article" date="2001" name="Clin. Diagn. Lab. Immunol.">
        <title>Identification of the psaA gene, coding for pneumococcal surface adhesin A, in viridans group streptococci other than Streptococcus pneumoniae.</title>
        <authorList>
            <person name="Jado I."/>
            <person name="Fenoll A."/>
            <person name="Casal J."/>
            <person name="Perez A."/>
        </authorList>
    </citation>
    <scope>NUCLEOTIDE SEQUENCE [GENOMIC DNA]</scope>
    <source>
        <strain>NCTC 10713</strain>
    </source>
</reference>
<name>MTSA_STRAP</name>
<evidence type="ECO:0000250" key="1">
    <source>
        <dbReference type="UniProtKB" id="P0A4G2"/>
    </source>
</evidence>
<evidence type="ECO:0000255" key="2">
    <source>
        <dbReference type="PROSITE-ProRule" id="PRU00303"/>
    </source>
</evidence>
<evidence type="ECO:0000305" key="3"/>
<protein>
    <recommendedName>
        <fullName evidence="3">Manganese ABC transporter substrate-binding lipoprotein PsaA</fullName>
    </recommendedName>
    <alternativeName>
        <fullName>Pneumococcal surface adhesin A</fullName>
    </alternativeName>
</protein>
<comment type="function">
    <text evidence="1">Part of the ATP-binding cassette (ABC) transport system PsaABC involved in manganese import (By similarity). Binds manganese with high affinity and specificity and delivers it to the membrane permease for translocation into the cytoplasm (By similarity). Also acts as an adhesin which is involved on adherence to extracellular matrix (By similarity).</text>
</comment>
<comment type="subcellular location">
    <subcellularLocation>
        <location evidence="2">Cell membrane</location>
        <topology evidence="2">Lipid-anchor</topology>
    </subcellularLocation>
</comment>
<comment type="similarity">
    <text evidence="3">Belongs to the bacterial solute-binding protein 9 family. Lipoprotein receptor antigen (Lrai) subfamily.</text>
</comment>